<keyword id="KW-0997">Cell inner membrane</keyword>
<keyword id="KW-1003">Cell membrane</keyword>
<keyword id="KW-0201">Cytochrome c-type biogenesis</keyword>
<keyword id="KW-0472">Membrane</keyword>
<keyword id="KW-1185">Reference proteome</keyword>
<keyword id="KW-0812">Transmembrane</keyword>
<keyword id="KW-1133">Transmembrane helix</keyword>
<evidence type="ECO:0000255" key="1"/>
<evidence type="ECO:0000305" key="2"/>
<name>CCMF_ECOLI</name>
<gene>
    <name type="primary">ccmF</name>
    <name type="synonym">yejR</name>
    <name type="ordered locus">b2196</name>
    <name type="ordered locus">JW2184</name>
</gene>
<proteinExistence type="evidence at protein level"/>
<sequence>MMPEIGNGLLCLALGIALLLSVYPLWGVARGDARMMASSRLFAWLLFMSVAGAFLVLVNAFVVNDFTVTYVASNSNTQLPVWYRVAATWGAHEGSLLLWVLLMSGWTFAVAIFSQRIPLDIVARVLAIMGMVSVGFLLFILFTSNPFSRTLPNFPIEGRDLNPLLQDPGLIFHPPLLYMGYVGFSVAFAFAIASLLSGRLDSTYARFTRPWTLAAWIFLTLGIVLGSAWAYYELGWGGWWFWDPVENASFMPWLVGTALMHSLAVTEQRASFKAWTLLLAISAFSLCLLGTFLVRSGVLVSVHAFASDPARGMFILAFMVLVIGGSLLLFAARGHKVRSRVNNALWSRESLLLANNVLLVAAMLVVLLGTLLPLVHKQLGLGSISIGEPFFNTMFTWLMVPFALLLGVGPLVRWGRDRPRKIRNLLIIAFISTLVLSLLLPWLFESKVVAMTVLGLAMACWIAVLAIAEAALRISRGTKTTFSYWGMVAAHLGLAVTIVGIAFSQNYSVERDVRMKSGDSVDIHEYRFTFRDVKEVTGPNWRGGVATIGVTRDGKPETVLYAEKRYYNTAGSMMTEAAIDGGITRDLYAALGEELENGAWAVRLYYKPFVRWIWAGGLMMALGGLLCLFDPRYRKRVSPQKTAPEAV</sequence>
<comment type="function">
    <text>Required for the biogenesis of c-type cytochromes. Possible subunit of a heme lyase.</text>
</comment>
<comment type="interaction">
    <interactant intactId="EBI-763370">
        <id>P33927</id>
    </interactant>
    <interactant intactId="EBI-560309">
        <id>P0ABM9</id>
        <label>ccmH</label>
    </interactant>
    <organismsDiffer>false</organismsDiffer>
    <experiments>3</experiments>
</comment>
<comment type="subcellular location">
    <subcellularLocation>
        <location>Cell inner membrane</location>
        <topology>Multi-pass membrane protein</topology>
    </subcellularLocation>
</comment>
<comment type="similarity">
    <text evidence="2">Belongs to the CcmF/CycK/Ccl1/NrfE/CcsA family.</text>
</comment>
<feature type="chain" id="PRO_0000201583" description="Cytochrome c-type biogenesis protein CcmF">
    <location>
        <begin position="1"/>
        <end position="647"/>
    </location>
</feature>
<feature type="topological domain" description="Periplasmic" evidence="1">
    <location>
        <begin position="1"/>
        <end position="8"/>
    </location>
</feature>
<feature type="transmembrane region" description="Helical" evidence="1">
    <location>
        <begin position="9"/>
        <end position="29"/>
    </location>
</feature>
<feature type="topological domain" description="Cytoplasmic" evidence="1">
    <location>
        <begin position="30"/>
        <end position="41"/>
    </location>
</feature>
<feature type="transmembrane region" description="Helical" evidence="1">
    <location>
        <begin position="42"/>
        <end position="62"/>
    </location>
</feature>
<feature type="topological domain" description="Periplasmic" evidence="1">
    <location>
        <begin position="63"/>
        <end position="93"/>
    </location>
</feature>
<feature type="transmembrane region" description="Helical" evidence="1">
    <location>
        <begin position="94"/>
        <end position="114"/>
    </location>
</feature>
<feature type="topological domain" description="Cytoplasmic" evidence="1">
    <location>
        <begin position="115"/>
        <end position="120"/>
    </location>
</feature>
<feature type="transmembrane region" description="Helical" evidence="1">
    <location>
        <begin position="121"/>
        <end position="141"/>
    </location>
</feature>
<feature type="topological domain" description="Periplasmic" evidence="1">
    <location>
        <begin position="142"/>
        <end position="175"/>
    </location>
</feature>
<feature type="transmembrane region" description="Helical" evidence="1">
    <location>
        <begin position="176"/>
        <end position="196"/>
    </location>
</feature>
<feature type="topological domain" description="Cytoplasmic" evidence="1">
    <location>
        <begin position="197"/>
        <end position="210"/>
    </location>
</feature>
<feature type="transmembrane region" description="Helical" evidence="1">
    <location>
        <begin position="211"/>
        <end position="231"/>
    </location>
</feature>
<feature type="topological domain" description="Periplasmic" evidence="1">
    <location>
        <begin position="232"/>
        <end position="235"/>
    </location>
</feature>
<feature type="transmembrane region" description="Helical" evidence="1">
    <location>
        <begin position="236"/>
        <end position="256"/>
    </location>
</feature>
<feature type="topological domain" description="Cytoplasmic" evidence="1">
    <location>
        <begin position="257"/>
        <end position="273"/>
    </location>
</feature>
<feature type="transmembrane region" description="Helical" evidence="1">
    <location>
        <begin position="274"/>
        <end position="294"/>
    </location>
</feature>
<feature type="topological domain" description="Periplasmic" evidence="1">
    <location>
        <begin position="295"/>
        <end position="311"/>
    </location>
</feature>
<feature type="transmembrane region" description="Helical" evidence="1">
    <location>
        <begin position="312"/>
        <end position="332"/>
    </location>
</feature>
<feature type="topological domain" description="Cytoplasmic" evidence="1">
    <location>
        <begin position="333"/>
        <end position="350"/>
    </location>
</feature>
<feature type="transmembrane region" description="Helical" evidence="1">
    <location>
        <begin position="351"/>
        <end position="371"/>
    </location>
</feature>
<feature type="topological domain" description="Periplasmic" evidence="1">
    <location>
        <begin position="372"/>
        <end position="389"/>
    </location>
</feature>
<feature type="transmembrane region" description="Helical" evidence="1">
    <location>
        <begin position="390"/>
        <end position="410"/>
    </location>
</feature>
<feature type="topological domain" description="Cytoplasmic" evidence="1">
    <location>
        <begin position="411"/>
        <end position="424"/>
    </location>
</feature>
<feature type="transmembrane region" description="Helical" evidence="1">
    <location>
        <begin position="425"/>
        <end position="445"/>
    </location>
</feature>
<feature type="topological domain" description="Periplasmic" evidence="1">
    <location>
        <begin position="446"/>
        <end position="447"/>
    </location>
</feature>
<feature type="transmembrane region" description="Helical" evidence="1">
    <location>
        <begin position="448"/>
        <end position="468"/>
    </location>
</feature>
<feature type="topological domain" description="Cytoplasmic" evidence="1">
    <location>
        <begin position="469"/>
        <end position="481"/>
    </location>
</feature>
<feature type="transmembrane region" description="Helical" evidence="1">
    <location>
        <begin position="482"/>
        <end position="502"/>
    </location>
</feature>
<feature type="topological domain" description="Periplasmic" evidence="1">
    <location>
        <begin position="503"/>
        <end position="608"/>
    </location>
</feature>
<feature type="transmembrane region" description="Helical" evidence="1">
    <location>
        <begin position="609"/>
        <end position="629"/>
    </location>
</feature>
<feature type="topological domain" description="Cytoplasmic" evidence="1">
    <location>
        <begin position="630"/>
        <end position="647"/>
    </location>
</feature>
<protein>
    <recommendedName>
        <fullName>Cytochrome c-type biogenesis protein CcmF</fullName>
    </recommendedName>
</protein>
<accession>P33927</accession>
<accession>Q2MAP7</accession>
<dbReference type="EMBL" id="U00008">
    <property type="protein sequence ID" value="AAA16388.1"/>
    <property type="molecule type" value="Genomic_DNA"/>
</dbReference>
<dbReference type="EMBL" id="U00096">
    <property type="protein sequence ID" value="AAC75256.1"/>
    <property type="molecule type" value="Genomic_DNA"/>
</dbReference>
<dbReference type="EMBL" id="AP009048">
    <property type="protein sequence ID" value="BAE76659.1"/>
    <property type="molecule type" value="Genomic_DNA"/>
</dbReference>
<dbReference type="PIR" id="B64989">
    <property type="entry name" value="B64989"/>
</dbReference>
<dbReference type="RefSeq" id="NP_416700.1">
    <property type="nucleotide sequence ID" value="NC_000913.3"/>
</dbReference>
<dbReference type="RefSeq" id="WP_000982447.1">
    <property type="nucleotide sequence ID" value="NZ_SSZK01000027.1"/>
</dbReference>
<dbReference type="SMR" id="P33927"/>
<dbReference type="BioGRID" id="4260482">
    <property type="interactions" value="42"/>
</dbReference>
<dbReference type="ComplexPortal" id="CPX-3569">
    <property type="entry name" value="CcmFH system I cytochrome c biogenesis complex"/>
</dbReference>
<dbReference type="DIP" id="DIP-9256N"/>
<dbReference type="FunCoup" id="P33927">
    <property type="interactions" value="150"/>
</dbReference>
<dbReference type="IntAct" id="P33927">
    <property type="interactions" value="3"/>
</dbReference>
<dbReference type="MINT" id="P33927"/>
<dbReference type="STRING" id="511145.b2196"/>
<dbReference type="TCDB" id="9.B.14.1.3">
    <property type="family name" value="the putative heme handling protein (hhp) family"/>
</dbReference>
<dbReference type="PaxDb" id="511145-b2196"/>
<dbReference type="EnsemblBacteria" id="AAC75256">
    <property type="protein sequence ID" value="AAC75256"/>
    <property type="gene ID" value="b2196"/>
</dbReference>
<dbReference type="GeneID" id="948783"/>
<dbReference type="KEGG" id="ecj:JW2184"/>
<dbReference type="KEGG" id="eco:b2196"/>
<dbReference type="KEGG" id="ecoc:C3026_12275"/>
<dbReference type="PATRIC" id="fig|1411691.4.peg.40"/>
<dbReference type="EchoBASE" id="EB1985"/>
<dbReference type="eggNOG" id="COG1138">
    <property type="taxonomic scope" value="Bacteria"/>
</dbReference>
<dbReference type="HOGENOM" id="CLU_015041_3_0_6"/>
<dbReference type="InParanoid" id="P33927"/>
<dbReference type="OMA" id="SYWGMQL"/>
<dbReference type="OrthoDB" id="9761451at2"/>
<dbReference type="PhylomeDB" id="P33927"/>
<dbReference type="BioCyc" id="EcoCyc:EG12054-MONOMER"/>
<dbReference type="BioCyc" id="MetaCyc:EG12054-MONOMER"/>
<dbReference type="PRO" id="PR:P33927"/>
<dbReference type="Proteomes" id="UP000000625">
    <property type="component" value="Chromosome"/>
</dbReference>
<dbReference type="GO" id="GO:0005886">
    <property type="term" value="C:plasma membrane"/>
    <property type="evidence" value="ECO:0000314"/>
    <property type="project" value="EcoCyc"/>
</dbReference>
<dbReference type="GO" id="GO:0020037">
    <property type="term" value="F:heme binding"/>
    <property type="evidence" value="ECO:0000315"/>
    <property type="project" value="EcoCyc"/>
</dbReference>
<dbReference type="GO" id="GO:0015232">
    <property type="term" value="F:heme transmembrane transporter activity"/>
    <property type="evidence" value="ECO:0007669"/>
    <property type="project" value="InterPro"/>
</dbReference>
<dbReference type="GO" id="GO:0016679">
    <property type="term" value="F:oxidoreductase activity, acting on diphenols and related substances as donors"/>
    <property type="evidence" value="ECO:0000314"/>
    <property type="project" value="EcoCyc"/>
</dbReference>
<dbReference type="GO" id="GO:0017004">
    <property type="term" value="P:cytochrome complex assembly"/>
    <property type="evidence" value="ECO:0000314"/>
    <property type="project" value="ComplexPortal"/>
</dbReference>
<dbReference type="InterPro" id="IPR032523">
    <property type="entry name" value="CcmF_C"/>
</dbReference>
<dbReference type="InterPro" id="IPR002541">
    <property type="entry name" value="Cyt_c_assembly"/>
</dbReference>
<dbReference type="InterPro" id="IPR003567">
    <property type="entry name" value="Cyt_c_biogenesis"/>
</dbReference>
<dbReference type="InterPro" id="IPR003568">
    <property type="entry name" value="Cyt_c_biogenesis_CcmF"/>
</dbReference>
<dbReference type="NCBIfam" id="TIGR00353">
    <property type="entry name" value="nrfE"/>
    <property type="match status" value="1"/>
</dbReference>
<dbReference type="NCBIfam" id="NF007691">
    <property type="entry name" value="PRK10369.1"/>
    <property type="match status" value="1"/>
</dbReference>
<dbReference type="PANTHER" id="PTHR43653">
    <property type="entry name" value="CYTOCHROME C ASSEMBLY PROTEIN-RELATED"/>
    <property type="match status" value="1"/>
</dbReference>
<dbReference type="PANTHER" id="PTHR43653:SF1">
    <property type="entry name" value="CYTOCHROME C-TYPE BIOGENESIS PROTEIN CCMF"/>
    <property type="match status" value="1"/>
</dbReference>
<dbReference type="Pfam" id="PF16327">
    <property type="entry name" value="CcmF_C"/>
    <property type="match status" value="1"/>
</dbReference>
<dbReference type="Pfam" id="PF01578">
    <property type="entry name" value="Cytochrom_C_asm"/>
    <property type="match status" value="1"/>
</dbReference>
<dbReference type="PRINTS" id="PR01410">
    <property type="entry name" value="CCBIOGENESIS"/>
</dbReference>
<dbReference type="PRINTS" id="PR01411">
    <property type="entry name" value="CCMFBIOGNSIS"/>
</dbReference>
<organism>
    <name type="scientific">Escherichia coli (strain K12)</name>
    <dbReference type="NCBI Taxonomy" id="83333"/>
    <lineage>
        <taxon>Bacteria</taxon>
        <taxon>Pseudomonadati</taxon>
        <taxon>Pseudomonadota</taxon>
        <taxon>Gammaproteobacteria</taxon>
        <taxon>Enterobacterales</taxon>
        <taxon>Enterobacteriaceae</taxon>
        <taxon>Escherichia</taxon>
    </lineage>
</organism>
<reference key="1">
    <citation type="submission" date="1993-10" db="EMBL/GenBank/DDBJ databases">
        <title>Automated multiplex sequencing of the E.coli genome.</title>
        <authorList>
            <person name="Richterich P."/>
            <person name="Lakey N."/>
            <person name="Gryan G."/>
            <person name="Jaehn L."/>
            <person name="Mintz L."/>
            <person name="Robison K."/>
            <person name="Church G.M."/>
        </authorList>
    </citation>
    <scope>NUCLEOTIDE SEQUENCE [LARGE SCALE GENOMIC DNA]</scope>
    <source>
        <strain>K12 / BHB2600</strain>
    </source>
</reference>
<reference key="2">
    <citation type="journal article" date="1997" name="Science">
        <title>The complete genome sequence of Escherichia coli K-12.</title>
        <authorList>
            <person name="Blattner F.R."/>
            <person name="Plunkett G. III"/>
            <person name="Bloch C.A."/>
            <person name="Perna N.T."/>
            <person name="Burland V."/>
            <person name="Riley M."/>
            <person name="Collado-Vides J."/>
            <person name="Glasner J.D."/>
            <person name="Rode C.K."/>
            <person name="Mayhew G.F."/>
            <person name="Gregor J."/>
            <person name="Davis N.W."/>
            <person name="Kirkpatrick H.A."/>
            <person name="Goeden M.A."/>
            <person name="Rose D.J."/>
            <person name="Mau B."/>
            <person name="Shao Y."/>
        </authorList>
    </citation>
    <scope>NUCLEOTIDE SEQUENCE [LARGE SCALE GENOMIC DNA]</scope>
    <source>
        <strain>K12 / MG1655 / ATCC 47076</strain>
    </source>
</reference>
<reference key="3">
    <citation type="journal article" date="2006" name="Mol. Syst. Biol.">
        <title>Highly accurate genome sequences of Escherichia coli K-12 strains MG1655 and W3110.</title>
        <authorList>
            <person name="Hayashi K."/>
            <person name="Morooka N."/>
            <person name="Yamamoto Y."/>
            <person name="Fujita K."/>
            <person name="Isono K."/>
            <person name="Choi S."/>
            <person name="Ohtsubo E."/>
            <person name="Baba T."/>
            <person name="Wanner B.L."/>
            <person name="Mori H."/>
            <person name="Horiuchi T."/>
        </authorList>
    </citation>
    <scope>NUCLEOTIDE SEQUENCE [LARGE SCALE GENOMIC DNA]</scope>
    <source>
        <strain>K12 / W3110 / ATCC 27325 / DSM 5911</strain>
    </source>
</reference>
<reference key="4">
    <citation type="journal article" date="1995" name="J. Bacteriol.">
        <title>Escherichia coli genes required for cytochrome c maturation.</title>
        <authorList>
            <person name="Thoeny-Meyer L."/>
            <person name="Fischer F."/>
            <person name="Kunzler P."/>
            <person name="Ritz D."/>
            <person name="Hennecke H."/>
        </authorList>
    </citation>
    <scope>CHARACTERIZATION</scope>
    <scope>GENE NAME</scope>
</reference>
<reference key="5">
    <citation type="journal article" date="2005" name="Science">
        <title>Global topology analysis of the Escherichia coli inner membrane proteome.</title>
        <authorList>
            <person name="Daley D.O."/>
            <person name="Rapp M."/>
            <person name="Granseth E."/>
            <person name="Melen K."/>
            <person name="Drew D."/>
            <person name="von Heijne G."/>
        </authorList>
    </citation>
    <scope>TOPOLOGY [LARGE SCALE ANALYSIS]</scope>
    <source>
        <strain>K12 / MG1655 / ATCC 47076</strain>
    </source>
</reference>